<accession>Q84173</accession>
<comment type="function">
    <text evidence="1">Catalyzes DNA synthesis. Acquires processivity by associating with a heterodimeric processivity factor comprised of the viral A20 and D4 proteins, thereby forming the DNA polymerase holoenzyme. Displays 3'- to 5' exonuclease activity. Might participate in viral DNA recombination. Does not perform translesion synthesis across an abasic site (By similarity).</text>
</comment>
<comment type="catalytic activity">
    <reaction>
        <text>DNA(n) + a 2'-deoxyribonucleoside 5'-triphosphate = DNA(n+1) + diphosphate</text>
        <dbReference type="Rhea" id="RHEA:22508"/>
        <dbReference type="Rhea" id="RHEA-COMP:17339"/>
        <dbReference type="Rhea" id="RHEA-COMP:17340"/>
        <dbReference type="ChEBI" id="CHEBI:33019"/>
        <dbReference type="ChEBI" id="CHEBI:61560"/>
        <dbReference type="ChEBI" id="CHEBI:173112"/>
        <dbReference type="EC" id="2.7.7.7"/>
    </reaction>
</comment>
<comment type="subunit">
    <text evidence="1">Interacts with A20. Component of the Uracil-DNA glycosylase(UDG)-A20-polymerase complex; A20 and UDG form a heterodimeric processivity factor that associates with E9 to form the processive polymerase holoenzyme (By similarity).</text>
</comment>
<comment type="similarity">
    <text evidence="2">Belongs to the DNA polymerase type-B family.</text>
</comment>
<gene>
    <name type="primary">POL</name>
</gene>
<organismHost>
    <name type="scientific">Capra hircus</name>
    <name type="common">Goat</name>
    <dbReference type="NCBI Taxonomy" id="9925"/>
</organismHost>
<organismHost>
    <name type="scientific">Homo sapiens</name>
    <name type="common">Human</name>
    <dbReference type="NCBI Taxonomy" id="9606"/>
</organismHost>
<organismHost>
    <name type="scientific">Ovis aries</name>
    <name type="common">Sheep</name>
    <dbReference type="NCBI Taxonomy" id="9940"/>
</organismHost>
<feature type="chain" id="PRO_0000046536" description="DNA polymerase">
    <location>
        <begin position="1"/>
        <end position="1008"/>
    </location>
</feature>
<reference key="1">
    <citation type="journal article" date="1996" name="J. Gen. Virol.">
        <title>Location, DNA sequence and transcriptional analysis of the DNA polymerase gene of orf virus.</title>
        <authorList>
            <person name="Mercer A.A."/>
            <person name="Green G."/>
            <person name="Sullivan J.T."/>
            <person name="Robinson A.J."/>
            <person name="Drillien R."/>
        </authorList>
    </citation>
    <scope>NUCLEOTIDE SEQUENCE [GENOMIC DNA]</scope>
</reference>
<proteinExistence type="inferred from homology"/>
<dbReference type="EC" id="2.7.7.7"/>
<dbReference type="EMBL" id="U49979">
    <property type="protein sequence ID" value="AAB19092.1"/>
    <property type="molecule type" value="Genomic_DNA"/>
</dbReference>
<dbReference type="SMR" id="Q84173"/>
<dbReference type="GO" id="GO:0003677">
    <property type="term" value="F:DNA binding"/>
    <property type="evidence" value="ECO:0007669"/>
    <property type="project" value="UniProtKB-KW"/>
</dbReference>
<dbReference type="GO" id="GO:0003887">
    <property type="term" value="F:DNA-directed DNA polymerase activity"/>
    <property type="evidence" value="ECO:0007669"/>
    <property type="project" value="UniProtKB-KW"/>
</dbReference>
<dbReference type="GO" id="GO:0000166">
    <property type="term" value="F:nucleotide binding"/>
    <property type="evidence" value="ECO:0007669"/>
    <property type="project" value="InterPro"/>
</dbReference>
<dbReference type="GO" id="GO:0006261">
    <property type="term" value="P:DNA-templated DNA replication"/>
    <property type="evidence" value="ECO:0007669"/>
    <property type="project" value="TreeGrafter"/>
</dbReference>
<dbReference type="GO" id="GO:0039693">
    <property type="term" value="P:viral DNA genome replication"/>
    <property type="evidence" value="ECO:0007669"/>
    <property type="project" value="UniProtKB-KW"/>
</dbReference>
<dbReference type="Gene3D" id="1.10.287.690">
    <property type="entry name" value="Helix hairpin bin"/>
    <property type="match status" value="1"/>
</dbReference>
<dbReference type="Gene3D" id="3.90.1600.10">
    <property type="entry name" value="Palm domain of DNA polymerase"/>
    <property type="match status" value="2"/>
</dbReference>
<dbReference type="Gene3D" id="3.30.420.10">
    <property type="entry name" value="Ribonuclease H-like superfamily/Ribonuclease H"/>
    <property type="match status" value="1"/>
</dbReference>
<dbReference type="InterPro" id="IPR006172">
    <property type="entry name" value="DNA-dir_DNA_pol_B"/>
</dbReference>
<dbReference type="InterPro" id="IPR017964">
    <property type="entry name" value="DNA-dir_DNA_pol_B_CS"/>
</dbReference>
<dbReference type="InterPro" id="IPR006133">
    <property type="entry name" value="DNA-dir_DNA_pol_B_exonuc"/>
</dbReference>
<dbReference type="InterPro" id="IPR006134">
    <property type="entry name" value="DNA-dir_DNA_pol_B_multi_dom"/>
</dbReference>
<dbReference type="InterPro" id="IPR013617">
    <property type="entry name" value="DNA-dir_DNA_pol_B_vir_insert"/>
</dbReference>
<dbReference type="InterPro" id="IPR043502">
    <property type="entry name" value="DNA/RNA_pol_sf"/>
</dbReference>
<dbReference type="InterPro" id="IPR023211">
    <property type="entry name" value="DNA_pol_palm_dom_sf"/>
</dbReference>
<dbReference type="InterPro" id="IPR050240">
    <property type="entry name" value="DNA_pol_type-B"/>
</dbReference>
<dbReference type="InterPro" id="IPR013660">
    <property type="entry name" value="DNApol_B_exo_N"/>
</dbReference>
<dbReference type="InterPro" id="IPR012337">
    <property type="entry name" value="RNaseH-like_sf"/>
</dbReference>
<dbReference type="InterPro" id="IPR036397">
    <property type="entry name" value="RNaseH_sf"/>
</dbReference>
<dbReference type="PANTHER" id="PTHR10322">
    <property type="entry name" value="DNA POLYMERASE CATALYTIC SUBUNIT"/>
    <property type="match status" value="1"/>
</dbReference>
<dbReference type="PANTHER" id="PTHR10322:SF23">
    <property type="entry name" value="DNA POLYMERASE DELTA CATALYTIC SUBUNIT"/>
    <property type="match status" value="1"/>
</dbReference>
<dbReference type="Pfam" id="PF00136">
    <property type="entry name" value="DNA_pol_B"/>
    <property type="match status" value="1"/>
</dbReference>
<dbReference type="Pfam" id="PF08408">
    <property type="entry name" value="DNA_pol_B_3"/>
    <property type="match status" value="1"/>
</dbReference>
<dbReference type="Pfam" id="PF03104">
    <property type="entry name" value="DNA_pol_B_exo1"/>
    <property type="match status" value="1"/>
</dbReference>
<dbReference type="Pfam" id="PF08452">
    <property type="entry name" value="DNAP_B_exo_N"/>
    <property type="match status" value="1"/>
</dbReference>
<dbReference type="PRINTS" id="PR00106">
    <property type="entry name" value="DNAPOLB"/>
</dbReference>
<dbReference type="SMART" id="SM00486">
    <property type="entry name" value="POLBc"/>
    <property type="match status" value="1"/>
</dbReference>
<dbReference type="SUPFAM" id="SSF56672">
    <property type="entry name" value="DNA/RNA polymerases"/>
    <property type="match status" value="1"/>
</dbReference>
<dbReference type="SUPFAM" id="SSF53098">
    <property type="entry name" value="Ribonuclease H-like"/>
    <property type="match status" value="1"/>
</dbReference>
<dbReference type="PROSITE" id="PS00116">
    <property type="entry name" value="DNA_POLYMERASE_B"/>
    <property type="match status" value="1"/>
</dbReference>
<sequence length="1008" mass="113955">MELKCLNWFENRGNDSRFLFLKARRADNAVVYLRFVQHFYYVVRADAVADIAQPLAWTRALGPMSVVSIDEIVARSAKIPERQRSEIELCLVASERKLAPPEVFMSDFLNVSWFFVAHDIDPDGCYRVDPALLRDLGSNCFHCDDPGACFAEKIPRFNVTRSGLFLDIECHFEKKFPSVFKNAVSHISFCVVDKDGAERRFTLTNSDMLSDADLEEAARREIPVCLDPADVKFDAEVTLCPEVTLLRVAKRLLEMPLDFVVTFNGHNFDLRYLDSRLSLLTGEHIRFRLPDGTETVNFCVYERTKSSHKGVGGVSSTTFHINNNNGTIYFDLYAFIQRTEKLDSYKLDAISKNAFHCTAVVEDARPDAVRFRGDRSTDADGNAAVFARVLSTGNYVTVDERVCRVLHKRVDEDGFTVDLADPAARAPGDRVTLAFGKDDVSLADMYANYSLDVCLDMARYCLHDACLCLYLWSHYGVETKIAAAASTYLLPQSVVFEYRASTCIKGPLMKLLLENRTVMVRADTKSKFFYEGGRVMAPKQKMHNKHVLIFDYNSLYPNVCIYANLSPETLVGVVVSDNRLDAEVAAVDVRRMFPAPRYIAVPCEPRSPELVAEVAIFDREAKGIIPMLLRSFLDARAKYKKLMKAAETAVDREIYNSMQYTYKITANSVYGLMGFRNSALFSYASAKSCTAIGRTMIAYLERTLDGASVCGTRLSLAAAPDNPLLRDEAFAGRAAELEIDAAVAGERTERVGFRSVYGDTDSVFLEVGASDIAFSRRVGRCLERVINEHVLFANFKVEFEAVYCNLIMQSKKKYTTIKFAVSDGGGSERVSKGTSETRRDVAPFHKLMIRKYKDMLCRALAEEGSGNVGVEILRSLEDELTFEFEARSMPLDWFLLSRTHHKNFKSPDNPNVALVTRYNAANAEAIEIGERYFFAYVCEEGPWRRRIANVKSYERVVDKTFRLDKNERIMYEVYFKRLCTEIVNLLDNKAMCTLFFERLFGSKPVFTG</sequence>
<protein>
    <recommendedName>
        <fullName>DNA polymerase</fullName>
        <ecNumber>2.7.7.7</ecNumber>
    </recommendedName>
</protein>
<evidence type="ECO:0000250" key="1"/>
<evidence type="ECO:0000305" key="2"/>
<name>DPOL_ORFN2</name>
<organism>
    <name type="scientific">Orf virus (strain NZ2)</name>
    <name type="common">OV NZ-2</name>
    <dbReference type="NCBI Taxonomy" id="10259"/>
    <lineage>
        <taxon>Viruses</taxon>
        <taxon>Varidnaviria</taxon>
        <taxon>Bamfordvirae</taxon>
        <taxon>Nucleocytoviricota</taxon>
        <taxon>Pokkesviricetes</taxon>
        <taxon>Chitovirales</taxon>
        <taxon>Poxviridae</taxon>
        <taxon>Chordopoxvirinae</taxon>
        <taxon>Parapoxvirus</taxon>
        <taxon>Orf virus</taxon>
    </lineage>
</organism>
<keyword id="KW-0235">DNA replication</keyword>
<keyword id="KW-0238">DNA-binding</keyword>
<keyword id="KW-0239">DNA-directed DNA polymerase</keyword>
<keyword id="KW-0548">Nucleotidyltransferase</keyword>
<keyword id="KW-0808">Transferase</keyword>
<keyword id="KW-1194">Viral DNA replication</keyword>